<evidence type="ECO:0000250" key="1"/>
<evidence type="ECO:0000250" key="2">
    <source>
        <dbReference type="UniProtKB" id="P0C8U4"/>
    </source>
</evidence>
<evidence type="ECO:0000250" key="3">
    <source>
        <dbReference type="UniProtKB" id="P56973"/>
    </source>
</evidence>
<evidence type="ECO:0000255" key="4"/>
<evidence type="ECO:0000269" key="5">
    <source>
    </source>
</evidence>
<evidence type="ECO:0000303" key="6">
    <source>
    </source>
</evidence>
<evidence type="ECO:0000303" key="7">
    <source>
    </source>
</evidence>
<evidence type="ECO:0000305" key="8"/>
<evidence type="ECO:0000305" key="9">
    <source>
    </source>
</evidence>
<evidence type="ECO:0000305" key="10">
    <source>
    </source>
</evidence>
<name>CA1A_CONCT</name>
<accession>D4HPD6</accession>
<proteinExistence type="evidence at protein level"/>
<organism>
    <name type="scientific">Conus catus</name>
    <name type="common">Cat cone</name>
    <dbReference type="NCBI Taxonomy" id="101291"/>
    <lineage>
        <taxon>Eukaryota</taxon>
        <taxon>Metazoa</taxon>
        <taxon>Spiralia</taxon>
        <taxon>Lophotrochozoa</taxon>
        <taxon>Mollusca</taxon>
        <taxon>Gastropoda</taxon>
        <taxon>Caenogastropoda</taxon>
        <taxon>Neogastropoda</taxon>
        <taxon>Conoidea</taxon>
        <taxon>Conidae</taxon>
        <taxon>Conus</taxon>
        <taxon>Pionoconus</taxon>
    </lineage>
</organism>
<feature type="signal peptide" evidence="4">
    <location>
        <begin position="1"/>
        <end position="16"/>
    </location>
</feature>
<feature type="propeptide" id="PRO_0000420720" evidence="1">
    <location>
        <begin position="17"/>
        <end position="42"/>
    </location>
</feature>
<feature type="peptide" id="PRO_0000420721" description="Alpha-conotoxin CIA" evidence="10">
    <location>
        <begin position="43"/>
        <end position="57"/>
    </location>
</feature>
<feature type="modified residue" description="Cysteine amide" evidence="2">
    <location>
        <position position="57"/>
    </location>
</feature>
<feature type="disulfide bond" evidence="3">
    <location>
        <begin position="46"/>
        <end position="51"/>
    </location>
</feature>
<feature type="disulfide bond" evidence="3">
    <location>
        <begin position="47"/>
        <end position="57"/>
    </location>
</feature>
<keyword id="KW-0008">Acetylcholine receptor inhibiting toxin</keyword>
<keyword id="KW-0027">Amidation</keyword>
<keyword id="KW-0165">Cleavage on pair of basic residues</keyword>
<keyword id="KW-1015">Disulfide bond</keyword>
<keyword id="KW-0872">Ion channel impairing toxin</keyword>
<keyword id="KW-0528">Neurotoxin</keyword>
<keyword id="KW-0629">Postsynaptic neurotoxin</keyword>
<keyword id="KW-0964">Secreted</keyword>
<keyword id="KW-0732">Signal</keyword>
<keyword id="KW-0800">Toxin</keyword>
<comment type="function">
    <text evidence="5">Alpha-conotoxins act on postsynaptic membranes, they bind to the nicotinic acetylcholine receptors (nAChR) and thus inhibit them. This toxin blocks the rat muscle nAChRs alpha-1-beta-1-gamma-delta (CHRNA1-CHRNB1-CHRNG-CHRND) (IC(50)=5.7 nM) and the rat neuronal nAChR alpha-3-beta-2/CHRNA3-CHRNB2 (IC(50)=2060 nM) (PubMed:29857567). In vivo, intramuscular injection into zebrafish produces rapid flaccid paralysis (PubMed:29857567).</text>
</comment>
<comment type="subcellular location">
    <subcellularLocation>
        <location evidence="9">Secreted</location>
    </subcellularLocation>
</comment>
<comment type="tissue specificity">
    <text evidence="9">Expressed by the venom duct.</text>
</comment>
<comment type="domain">
    <text evidence="8">The cysteine framework is I (CC-C-C). Alpha3/5 pattern.</text>
</comment>
<comment type="toxic dose">
    <text evidence="5">PD(50) is 110 ug/kg into zebrafish.</text>
</comment>
<comment type="miscellaneous">
    <text evidence="5">Negative results: does not show effect on neuronal nAChR alpha-4-beta-2/CHRNA4-CHRNB2 and alpha-7/CHRNA7 (when tested at 10 uM).</text>
</comment>
<comment type="similarity">
    <text evidence="8">Belongs to the conotoxin A superfamily.</text>
</comment>
<dbReference type="EMBL" id="FJ868069">
    <property type="protein sequence ID" value="ACZ49755.1"/>
    <property type="molecule type" value="Genomic_DNA"/>
</dbReference>
<dbReference type="ConoServer" id="3926">
    <property type="toxin name" value="C4.3 precursor"/>
</dbReference>
<dbReference type="ConoServer" id="8016">
    <property type="toxin name" value="CIA"/>
</dbReference>
<dbReference type="GO" id="GO:0005576">
    <property type="term" value="C:extracellular region"/>
    <property type="evidence" value="ECO:0007669"/>
    <property type="project" value="UniProtKB-SubCell"/>
</dbReference>
<dbReference type="GO" id="GO:0035792">
    <property type="term" value="C:host cell postsynaptic membrane"/>
    <property type="evidence" value="ECO:0007669"/>
    <property type="project" value="UniProtKB-KW"/>
</dbReference>
<dbReference type="GO" id="GO:0030550">
    <property type="term" value="F:acetylcholine receptor inhibitor activity"/>
    <property type="evidence" value="ECO:0007669"/>
    <property type="project" value="UniProtKB-KW"/>
</dbReference>
<dbReference type="GO" id="GO:0099106">
    <property type="term" value="F:ion channel regulator activity"/>
    <property type="evidence" value="ECO:0007669"/>
    <property type="project" value="UniProtKB-KW"/>
</dbReference>
<dbReference type="GO" id="GO:0090729">
    <property type="term" value="F:toxin activity"/>
    <property type="evidence" value="ECO:0007669"/>
    <property type="project" value="UniProtKB-KW"/>
</dbReference>
<dbReference type="InterPro" id="IPR009958">
    <property type="entry name" value="Conotoxin_a-typ"/>
</dbReference>
<dbReference type="InterPro" id="IPR018072">
    <property type="entry name" value="Conotoxin_a-typ_CS"/>
</dbReference>
<dbReference type="Pfam" id="PF07365">
    <property type="entry name" value="Toxin_8"/>
    <property type="match status" value="1"/>
</dbReference>
<dbReference type="PROSITE" id="PS60014">
    <property type="entry name" value="ALPHA_CONOTOXIN"/>
    <property type="match status" value="1"/>
</dbReference>
<sequence length="59" mass="6642">MFTVFLLVVLTITVVSFPSDRASDGRDDEAKDERSDMYKSKRNGRCCHPACGKHFSCGR</sequence>
<reference key="1">
    <citation type="journal article" date="2010" name="J. Mol. Evol.">
        <title>Evolution of conus peptide genes: duplication and positive selection in the A-Superfamily.</title>
        <authorList>
            <person name="Puillandre N."/>
            <person name="Watkins M."/>
            <person name="Olivera B.M."/>
        </authorList>
    </citation>
    <scope>NUCLEOTIDE SEQUENCE [GENOMIC DNA]</scope>
</reference>
<reference key="2">
    <citation type="journal article" date="2018" name="Toxins">
        <title>Synthesis, structure and biological activity of CIA and CIB, two alpha-conotoxins from the predation-evoked venom of Conus catus.</title>
        <authorList>
            <person name="Giribaldi J."/>
            <person name="Wilson D."/>
            <person name="Nicke A."/>
            <person name="El Hamdaoui Y."/>
            <person name="Laconde G."/>
            <person name="Faucherre A."/>
            <person name="Moha Ou Maati H."/>
            <person name="Daly N.L."/>
            <person name="Enjalbal C."/>
            <person name="Dutertre S."/>
        </authorList>
    </citation>
    <scope>FUNCTION</scope>
    <scope>BIOASSAY</scope>
    <scope>TOXIC DOSE</scope>
    <scope>SYNTHESIS OF 43-57</scope>
    <scope>STRUCTURE BY NMR OF 43-57</scope>
</reference>
<protein>
    <recommendedName>
        <fullName evidence="7">Alpha-conotoxin CIA</fullName>
    </recommendedName>
    <alternativeName>
        <fullName evidence="6">Cl</fullName>
    </alternativeName>
</protein>